<feature type="chain" id="PRO_0000105720" description="Nodulation protein D 3">
    <location>
        <begin position="1"/>
        <end position="313"/>
    </location>
</feature>
<feature type="domain" description="HTH lysR-type" evidence="1">
    <location>
        <begin position="6"/>
        <end position="63"/>
    </location>
</feature>
<feature type="DNA-binding region" description="H-T-H motif" evidence="1">
    <location>
        <begin position="23"/>
        <end position="42"/>
    </location>
</feature>
<feature type="sequence conflict" description="In Ref. 2; CAA43697." evidence="2" ref="2">
    <original>I</original>
    <variation>V</variation>
    <location>
        <position position="232"/>
    </location>
</feature>
<feature type="sequence conflict" description="In Ref. 2; CAA43697." evidence="2" ref="2">
    <original>S</original>
    <variation>N</variation>
    <location>
        <position position="256"/>
    </location>
</feature>
<feature type="sequence conflict" description="In Ref. 2." evidence="2" ref="2">
    <original>CLGR</original>
    <variation>VLGVRH</variation>
    <location>
        <begin position="310"/>
        <end position="313"/>
    </location>
</feature>
<comment type="function">
    <text>NodD regulates the expression of the nodABCFE genes which encode other nodulation proteins. NodD is also a negative regulator of its own expression. Binds flavonoids as inducers.</text>
</comment>
<comment type="miscellaneous">
    <text>There are at least three nodD genes in R.meliloti. They differ in their specificity of interaction with different flavonoids and, consequently, contribute to the nodulation of various plant host species to different extents.</text>
</comment>
<comment type="similarity">
    <text evidence="2">Belongs to the LysR transcriptional regulatory family.</text>
</comment>
<comment type="sequence caution" evidence="2">
    <conflict type="erroneous initiation">
        <sequence resource="EMBL-CDS" id="CAA43697"/>
    </conflict>
</comment>
<reference key="1">
    <citation type="journal article" date="1991" name="Nucleic Acids Res.">
        <title>Genetic and physical analysis of the nodD3 region of Rhizobium meliloti.</title>
        <authorList>
            <person name="Rushing B.G."/>
            <person name="Yelton M.M."/>
            <person name="Long S.R."/>
        </authorList>
    </citation>
    <scope>NUCLEOTIDE SEQUENCE [GENOMIC DNA]</scope>
    <source>
        <strain>RCR2011 / SU47</strain>
    </source>
</reference>
<reference key="2">
    <citation type="journal article" date="1991" name="Mol. Microbiol.">
        <title>Involvement of the syrM and nodD3 genes of Rhizobium meliloti in nod gene activation and in optimal nodulation of the plant host.</title>
        <authorList>
            <person name="Kondorosi E."/>
            <person name="Buire M."/>
            <person name="Cren M."/>
            <person name="Iyer N."/>
            <person name="Hoffmann B."/>
            <person name="Kondorosi A."/>
        </authorList>
    </citation>
    <scope>NUCLEOTIDE SEQUENCE [GENOMIC DNA]</scope>
    <source>
        <strain>AK631</strain>
    </source>
</reference>
<reference key="3">
    <citation type="journal article" date="2001" name="Proc. Natl. Acad. Sci. U.S.A.">
        <title>Nucleotide sequence and predicted functions of the entire Sinorhizobium meliloti pSymA megaplasmid.</title>
        <authorList>
            <person name="Barnett M.J."/>
            <person name="Fisher R.F."/>
            <person name="Jones T."/>
            <person name="Komp C."/>
            <person name="Abola A.P."/>
            <person name="Barloy-Hubler F."/>
            <person name="Bowser L."/>
            <person name="Capela D."/>
            <person name="Galibert F."/>
            <person name="Gouzy J."/>
            <person name="Gurjal M."/>
            <person name="Hong A."/>
            <person name="Huizar L."/>
            <person name="Hyman R.W."/>
            <person name="Kahn D."/>
            <person name="Kahn M.L."/>
            <person name="Kalman S."/>
            <person name="Keating D.H."/>
            <person name="Palm C."/>
            <person name="Peck M.C."/>
            <person name="Surzycki R."/>
            <person name="Wells D.H."/>
            <person name="Yeh K.-C."/>
            <person name="Davis R.W."/>
            <person name="Federspiel N.A."/>
            <person name="Long S.R."/>
        </authorList>
    </citation>
    <scope>NUCLEOTIDE SEQUENCE [LARGE SCALE GENOMIC DNA]</scope>
    <source>
        <strain>1021</strain>
    </source>
</reference>
<reference key="4">
    <citation type="journal article" date="2001" name="Science">
        <title>The composite genome of the legume symbiont Sinorhizobium meliloti.</title>
        <authorList>
            <person name="Galibert F."/>
            <person name="Finan T.M."/>
            <person name="Long S.R."/>
            <person name="Puehler A."/>
            <person name="Abola P."/>
            <person name="Ampe F."/>
            <person name="Barloy-Hubler F."/>
            <person name="Barnett M.J."/>
            <person name="Becker A."/>
            <person name="Boistard P."/>
            <person name="Bothe G."/>
            <person name="Boutry M."/>
            <person name="Bowser L."/>
            <person name="Buhrmester J."/>
            <person name="Cadieu E."/>
            <person name="Capela D."/>
            <person name="Chain P."/>
            <person name="Cowie A."/>
            <person name="Davis R.W."/>
            <person name="Dreano S."/>
            <person name="Federspiel N.A."/>
            <person name="Fisher R.F."/>
            <person name="Gloux S."/>
            <person name="Godrie T."/>
            <person name="Goffeau A."/>
            <person name="Golding B."/>
            <person name="Gouzy J."/>
            <person name="Gurjal M."/>
            <person name="Hernandez-Lucas I."/>
            <person name="Hong A."/>
            <person name="Huizar L."/>
            <person name="Hyman R.W."/>
            <person name="Jones T."/>
            <person name="Kahn D."/>
            <person name="Kahn M.L."/>
            <person name="Kalman S."/>
            <person name="Keating D.H."/>
            <person name="Kiss E."/>
            <person name="Komp C."/>
            <person name="Lelaure V."/>
            <person name="Masuy D."/>
            <person name="Palm C."/>
            <person name="Peck M.C."/>
            <person name="Pohl T.M."/>
            <person name="Portetelle D."/>
            <person name="Purnelle B."/>
            <person name="Ramsperger U."/>
            <person name="Surzycki R."/>
            <person name="Thebault P."/>
            <person name="Vandenbol M."/>
            <person name="Vorhoelter F.J."/>
            <person name="Weidner S."/>
            <person name="Wells D.H."/>
            <person name="Wong K."/>
            <person name="Yeh K.-C."/>
            <person name="Batut J."/>
        </authorList>
    </citation>
    <scope>NUCLEOTIDE SEQUENCE [LARGE SCALE GENOMIC DNA]</scope>
    <source>
        <strain>1021</strain>
    </source>
</reference>
<organism>
    <name type="scientific">Rhizobium meliloti (strain 1021)</name>
    <name type="common">Ensifer meliloti</name>
    <name type="synonym">Sinorhizobium meliloti</name>
    <dbReference type="NCBI Taxonomy" id="266834"/>
    <lineage>
        <taxon>Bacteria</taxon>
        <taxon>Pseudomonadati</taxon>
        <taxon>Pseudomonadota</taxon>
        <taxon>Alphaproteobacteria</taxon>
        <taxon>Hyphomicrobiales</taxon>
        <taxon>Rhizobiaceae</taxon>
        <taxon>Sinorhizobium/Ensifer group</taxon>
        <taxon>Sinorhizobium</taxon>
    </lineage>
</organism>
<proteinExistence type="inferred from homology"/>
<geneLocation type="plasmid">
    <name>pSymA</name>
    <name>megaplasmid 1</name>
</geneLocation>
<accession>P23190</accession>
<evidence type="ECO:0000255" key="1">
    <source>
        <dbReference type="PROSITE-ProRule" id="PRU00253"/>
    </source>
</evidence>
<evidence type="ECO:0000305" key="2"/>
<protein>
    <recommendedName>
        <fullName>Nodulation protein D 3</fullName>
    </recommendedName>
</protein>
<dbReference type="EMBL" id="X53820">
    <property type="protein sequence ID" value="CAA37817.1"/>
    <property type="molecule type" value="Genomic_DNA"/>
</dbReference>
<dbReference type="EMBL" id="X61457">
    <property type="protein sequence ID" value="CAA43697.1"/>
    <property type="status" value="ALT_INIT"/>
    <property type="molecule type" value="Genomic_DNA"/>
</dbReference>
<dbReference type="EMBL" id="AE006469">
    <property type="protein sequence ID" value="AAK65116.1"/>
    <property type="molecule type" value="Genomic_DNA"/>
</dbReference>
<dbReference type="PIR" id="B95319">
    <property type="entry name" value="B95319"/>
</dbReference>
<dbReference type="PIR" id="S26838">
    <property type="entry name" value="S26838"/>
</dbReference>
<dbReference type="RefSeq" id="NP_435704.1">
    <property type="nucleotide sequence ID" value="NC_003037.1"/>
</dbReference>
<dbReference type="RefSeq" id="WP_010967440.1">
    <property type="nucleotide sequence ID" value="NC_003037.1"/>
</dbReference>
<dbReference type="SMR" id="P23190"/>
<dbReference type="DNASU" id="1235494"/>
<dbReference type="EnsemblBacteria" id="AAK65116">
    <property type="protein sequence ID" value="AAK65116"/>
    <property type="gene ID" value="SMa0840"/>
</dbReference>
<dbReference type="KEGG" id="sme:SMa0840"/>
<dbReference type="PATRIC" id="fig|266834.11.peg.469"/>
<dbReference type="HOGENOM" id="CLU_039613_39_0_5"/>
<dbReference type="OrthoDB" id="8339333at2"/>
<dbReference type="Proteomes" id="UP000001976">
    <property type="component" value="Plasmid pSymA"/>
</dbReference>
<dbReference type="GO" id="GO:0003677">
    <property type="term" value="F:DNA binding"/>
    <property type="evidence" value="ECO:0007669"/>
    <property type="project" value="UniProtKB-KW"/>
</dbReference>
<dbReference type="GO" id="GO:0003700">
    <property type="term" value="F:DNA-binding transcription factor activity"/>
    <property type="evidence" value="ECO:0007669"/>
    <property type="project" value="InterPro"/>
</dbReference>
<dbReference type="CDD" id="cd08462">
    <property type="entry name" value="PBP2_NodD"/>
    <property type="match status" value="1"/>
</dbReference>
<dbReference type="Gene3D" id="3.40.190.10">
    <property type="entry name" value="Periplasmic binding protein-like II"/>
    <property type="match status" value="2"/>
</dbReference>
<dbReference type="Gene3D" id="1.10.10.10">
    <property type="entry name" value="Winged helix-like DNA-binding domain superfamily/Winged helix DNA-binding domain"/>
    <property type="match status" value="1"/>
</dbReference>
<dbReference type="InterPro" id="IPR050389">
    <property type="entry name" value="LysR-type_TF"/>
</dbReference>
<dbReference type="InterPro" id="IPR037416">
    <property type="entry name" value="NodD_PBP2"/>
</dbReference>
<dbReference type="InterPro" id="IPR000847">
    <property type="entry name" value="Tscrpt_reg_HTH_LysR"/>
</dbReference>
<dbReference type="InterPro" id="IPR036388">
    <property type="entry name" value="WH-like_DNA-bd_sf"/>
</dbReference>
<dbReference type="InterPro" id="IPR036390">
    <property type="entry name" value="WH_DNA-bd_sf"/>
</dbReference>
<dbReference type="PANTHER" id="PTHR30118:SF6">
    <property type="entry name" value="HTH-TYPE TRANSCRIPTIONAL REGULATOR LEUO"/>
    <property type="match status" value="1"/>
</dbReference>
<dbReference type="PANTHER" id="PTHR30118">
    <property type="entry name" value="HTH-TYPE TRANSCRIPTIONAL REGULATOR LEUO-RELATED"/>
    <property type="match status" value="1"/>
</dbReference>
<dbReference type="Pfam" id="PF00126">
    <property type="entry name" value="HTH_1"/>
    <property type="match status" value="1"/>
</dbReference>
<dbReference type="PRINTS" id="PR00039">
    <property type="entry name" value="HTHLYSR"/>
</dbReference>
<dbReference type="SUPFAM" id="SSF53850">
    <property type="entry name" value="Periplasmic binding protein-like II"/>
    <property type="match status" value="1"/>
</dbReference>
<dbReference type="SUPFAM" id="SSF46785">
    <property type="entry name" value="Winged helix' DNA-binding domain"/>
    <property type="match status" value="1"/>
</dbReference>
<dbReference type="PROSITE" id="PS50931">
    <property type="entry name" value="HTH_LYSR"/>
    <property type="match status" value="1"/>
</dbReference>
<keyword id="KW-0010">Activator</keyword>
<keyword id="KW-0238">DNA-binding</keyword>
<keyword id="KW-0536">Nodulation</keyword>
<keyword id="KW-0614">Plasmid</keyword>
<keyword id="KW-1185">Reference proteome</keyword>
<keyword id="KW-0678">Repressor</keyword>
<keyword id="KW-0804">Transcription</keyword>
<keyword id="KW-0805">Transcription regulation</keyword>
<gene>
    <name type="primary">nodD3</name>
    <name type="ordered locus">RA0458</name>
    <name type="ORF">SMa0840</name>
</gene>
<sequence length="313" mass="35342">MRFKGLDLNLLVALDALMTKRSVTAAARSINLSQPAMSSAIARLRSYFQDELFRMQGRELITTPRAEALAPAIRDALLHIQFSIISWDMFNPAQSDRCFRIILSDFMTLVFFEKVVERVAREAPGVSFELLPPDDNPDELLRRGEVDFLIFPDVFMSSVHPKAKLFDQTLVSVGCLTNEQLLGDLSFERYMSMGHVAAQFGRALKPSVEQWLLLEHGYKRRIELVVPGFNLIPPLLSGTKRIAIIPLRLANHFAKSIPLRIVKHPLPLLSFTEAVQWPALHNKDQASIWMREILLDEAARIAAPRETAGCLGR</sequence>
<name>NODD3_RHIME</name>